<accession>Q9VDD7</accession>
<accession>A8JR61</accession>
<protein>
    <recommendedName>
        <fullName>Solute carrier family 35 member B1 homolog</fullName>
    </recommendedName>
    <alternativeName>
        <fullName>Protein medial glomeruli</fullName>
    </alternativeName>
</protein>
<comment type="function">
    <text evidence="1">Probable sugar transporter.</text>
</comment>
<comment type="subcellular location">
    <subcellularLocation>
        <location evidence="3">Endoplasmic reticulum membrane</location>
        <topology evidence="3">Multi-pass membrane protein</topology>
    </subcellularLocation>
</comment>
<comment type="domain">
    <text evidence="1">The di-lysine motif confers endoplasmic reticulum localization for type I membrane proteins.</text>
</comment>
<comment type="similarity">
    <text evidence="3">Belongs to the nucleotide-sugar transporter family. SLC35B subfamily.</text>
</comment>
<dbReference type="EMBL" id="AE014297">
    <property type="protein sequence ID" value="AAF55859.1"/>
    <property type="molecule type" value="Genomic_DNA"/>
</dbReference>
<dbReference type="EMBL" id="AE014297">
    <property type="protein sequence ID" value="ABW08715.1"/>
    <property type="molecule type" value="Genomic_DNA"/>
</dbReference>
<dbReference type="EMBL" id="BT031262">
    <property type="protein sequence ID" value="ABY20503.1"/>
    <property type="molecule type" value="mRNA"/>
</dbReference>
<dbReference type="RefSeq" id="NP_001097853.1">
    <property type="nucleotide sequence ID" value="NM_001104383.2"/>
</dbReference>
<dbReference type="RefSeq" id="NP_650949.1">
    <property type="nucleotide sequence ID" value="NM_142692.3"/>
</dbReference>
<dbReference type="SMR" id="Q9VDD7"/>
<dbReference type="BioGRID" id="67481">
    <property type="interactions" value="20"/>
</dbReference>
<dbReference type="FunCoup" id="Q9VDD7">
    <property type="interactions" value="924"/>
</dbReference>
<dbReference type="IntAct" id="Q9VDD7">
    <property type="interactions" value="15"/>
</dbReference>
<dbReference type="STRING" id="7227.FBpp0112171"/>
<dbReference type="PaxDb" id="7227-FBpp0112171"/>
<dbReference type="DNASU" id="42510"/>
<dbReference type="EnsemblMetazoa" id="FBtr0084017">
    <property type="protein sequence ID" value="FBpp0083420"/>
    <property type="gene ID" value="FBgn0250820"/>
</dbReference>
<dbReference type="EnsemblMetazoa" id="FBtr0113259">
    <property type="protein sequence ID" value="FBpp0112171"/>
    <property type="gene ID" value="FBgn0250820"/>
</dbReference>
<dbReference type="GeneID" id="42510"/>
<dbReference type="KEGG" id="dme:Dmel_CG5802"/>
<dbReference type="UCSC" id="CG5802-RA">
    <property type="organism name" value="d. melanogaster"/>
</dbReference>
<dbReference type="UCSC" id="CG5802-RB">
    <property type="organism name" value="d. melanogaster"/>
</dbReference>
<dbReference type="AGR" id="FB:FBgn0250820"/>
<dbReference type="CTD" id="42510"/>
<dbReference type="FlyBase" id="FBgn0250820">
    <property type="gene designation" value="meigo"/>
</dbReference>
<dbReference type="VEuPathDB" id="VectorBase:FBgn0250820"/>
<dbReference type="eggNOG" id="KOG1580">
    <property type="taxonomic scope" value="Eukaryota"/>
</dbReference>
<dbReference type="GeneTree" id="ENSGT00940000157900"/>
<dbReference type="HOGENOM" id="CLU_036019_1_0_1"/>
<dbReference type="InParanoid" id="Q9VDD7"/>
<dbReference type="OMA" id="CGAIGQV"/>
<dbReference type="OrthoDB" id="78344at2759"/>
<dbReference type="PhylomeDB" id="Q9VDD7"/>
<dbReference type="BioGRID-ORCS" id="42510">
    <property type="hits" value="0 hits in 1 CRISPR screen"/>
</dbReference>
<dbReference type="GenomeRNAi" id="42510"/>
<dbReference type="PRO" id="PR:Q9VDD7"/>
<dbReference type="Proteomes" id="UP000000803">
    <property type="component" value="Chromosome 3R"/>
</dbReference>
<dbReference type="Bgee" id="FBgn0250820">
    <property type="expression patterns" value="Expressed in oviduct (Drosophila) and 99 other cell types or tissues"/>
</dbReference>
<dbReference type="GO" id="GO:0005789">
    <property type="term" value="C:endoplasmic reticulum membrane"/>
    <property type="evidence" value="ECO:0000314"/>
    <property type="project" value="FlyBase"/>
</dbReference>
<dbReference type="GO" id="GO:0000139">
    <property type="term" value="C:Golgi membrane"/>
    <property type="evidence" value="ECO:0000318"/>
    <property type="project" value="GO_Central"/>
</dbReference>
<dbReference type="GO" id="GO:0005459">
    <property type="term" value="F:UDP-galactose transmembrane transporter activity"/>
    <property type="evidence" value="ECO:0000318"/>
    <property type="project" value="GO_Central"/>
</dbReference>
<dbReference type="GO" id="GO:0005460">
    <property type="term" value="F:UDP-glucose transmembrane transporter activity"/>
    <property type="evidence" value="ECO:0000318"/>
    <property type="project" value="GO_Central"/>
</dbReference>
<dbReference type="GO" id="GO:0007411">
    <property type="term" value="P:axon guidance"/>
    <property type="evidence" value="ECO:0000315"/>
    <property type="project" value="FlyBase"/>
</dbReference>
<dbReference type="GO" id="GO:0070983">
    <property type="term" value="P:dendrite guidance"/>
    <property type="evidence" value="ECO:0000315"/>
    <property type="project" value="FlyBase"/>
</dbReference>
<dbReference type="GO" id="GO:0006487">
    <property type="term" value="P:protein N-linked glycosylation"/>
    <property type="evidence" value="ECO:0000315"/>
    <property type="project" value="FlyBase"/>
</dbReference>
<dbReference type="GO" id="GO:0034976">
    <property type="term" value="P:response to endoplasmic reticulum stress"/>
    <property type="evidence" value="ECO:0000315"/>
    <property type="project" value="FlyBase"/>
</dbReference>
<dbReference type="GO" id="GO:0072334">
    <property type="term" value="P:UDP-galactose transmembrane transport"/>
    <property type="evidence" value="ECO:0000318"/>
    <property type="project" value="GO_Central"/>
</dbReference>
<dbReference type="Gene3D" id="1.10.3730.20">
    <property type="match status" value="1"/>
</dbReference>
<dbReference type="InterPro" id="IPR013657">
    <property type="entry name" value="SCL35B1-4/HUT1"/>
</dbReference>
<dbReference type="PANTHER" id="PTHR10778">
    <property type="entry name" value="SOLUTE CARRIER FAMILY 35 MEMBER B"/>
    <property type="match status" value="1"/>
</dbReference>
<dbReference type="PANTHER" id="PTHR10778:SF10">
    <property type="entry name" value="SOLUTE CARRIER FAMILY 35 MEMBER B1"/>
    <property type="match status" value="1"/>
</dbReference>
<dbReference type="Pfam" id="PF08449">
    <property type="entry name" value="UAA"/>
    <property type="match status" value="1"/>
</dbReference>
<dbReference type="SUPFAM" id="SSF103481">
    <property type="entry name" value="Multidrug resistance efflux transporter EmrE"/>
    <property type="match status" value="2"/>
</dbReference>
<sequence length="338" mass="37438">MNLPERSRFVIYAVGIFVCYFLYGIVQEKLTRGRYGEEVQTDGSVGERFTYALALVWVQCLCNYVFAKVLLTIRPQKEDTTNAGSYVACSLTYLLAMVSTNMAMRWVPYPTAVVGKSAKPIPVMILGVLIGRKSYSWTRYACVLTIVLGVILFMYKEGKVSNLPAETTLLGEVLLFLSLSMDGLTGAVQERIRAASAPSGQQMMRAMNFWSTLMLGVAMVFTGEAKEFMYFTIRHPEAWTHLSLIAVCGVLGQFFIFLMVASFGPLACSVVTTTRKFFTVLCSVLLFGNVLIARQWLGAVLVFAALFVDMLYGKKAPLATAKKPPVEGKLSEEKKLNS</sequence>
<keyword id="KW-0256">Endoplasmic reticulum</keyword>
<keyword id="KW-0472">Membrane</keyword>
<keyword id="KW-1185">Reference proteome</keyword>
<keyword id="KW-0762">Sugar transport</keyword>
<keyword id="KW-0812">Transmembrane</keyword>
<keyword id="KW-1133">Transmembrane helix</keyword>
<keyword id="KW-0813">Transport</keyword>
<organism>
    <name type="scientific">Drosophila melanogaster</name>
    <name type="common">Fruit fly</name>
    <dbReference type="NCBI Taxonomy" id="7227"/>
    <lineage>
        <taxon>Eukaryota</taxon>
        <taxon>Metazoa</taxon>
        <taxon>Ecdysozoa</taxon>
        <taxon>Arthropoda</taxon>
        <taxon>Hexapoda</taxon>
        <taxon>Insecta</taxon>
        <taxon>Pterygota</taxon>
        <taxon>Neoptera</taxon>
        <taxon>Endopterygota</taxon>
        <taxon>Diptera</taxon>
        <taxon>Brachycera</taxon>
        <taxon>Muscomorpha</taxon>
        <taxon>Ephydroidea</taxon>
        <taxon>Drosophilidae</taxon>
        <taxon>Drosophila</taxon>
        <taxon>Sophophora</taxon>
    </lineage>
</organism>
<gene>
    <name type="primary">meigo</name>
    <name type="ORF">CG5802</name>
</gene>
<name>S35B1_DROME</name>
<reference key="1">
    <citation type="journal article" date="2000" name="Science">
        <title>The genome sequence of Drosophila melanogaster.</title>
        <authorList>
            <person name="Adams M.D."/>
            <person name="Celniker S.E."/>
            <person name="Holt R.A."/>
            <person name="Evans C.A."/>
            <person name="Gocayne J.D."/>
            <person name="Amanatides P.G."/>
            <person name="Scherer S.E."/>
            <person name="Li P.W."/>
            <person name="Hoskins R.A."/>
            <person name="Galle R.F."/>
            <person name="George R.A."/>
            <person name="Lewis S.E."/>
            <person name="Richards S."/>
            <person name="Ashburner M."/>
            <person name="Henderson S.N."/>
            <person name="Sutton G.G."/>
            <person name="Wortman J.R."/>
            <person name="Yandell M.D."/>
            <person name="Zhang Q."/>
            <person name="Chen L.X."/>
            <person name="Brandon R.C."/>
            <person name="Rogers Y.-H.C."/>
            <person name="Blazej R.G."/>
            <person name="Champe M."/>
            <person name="Pfeiffer B.D."/>
            <person name="Wan K.H."/>
            <person name="Doyle C."/>
            <person name="Baxter E.G."/>
            <person name="Helt G."/>
            <person name="Nelson C.R."/>
            <person name="Miklos G.L.G."/>
            <person name="Abril J.F."/>
            <person name="Agbayani A."/>
            <person name="An H.-J."/>
            <person name="Andrews-Pfannkoch C."/>
            <person name="Baldwin D."/>
            <person name="Ballew R.M."/>
            <person name="Basu A."/>
            <person name="Baxendale J."/>
            <person name="Bayraktaroglu L."/>
            <person name="Beasley E.M."/>
            <person name="Beeson K.Y."/>
            <person name="Benos P.V."/>
            <person name="Berman B.P."/>
            <person name="Bhandari D."/>
            <person name="Bolshakov S."/>
            <person name="Borkova D."/>
            <person name="Botchan M.R."/>
            <person name="Bouck J."/>
            <person name="Brokstein P."/>
            <person name="Brottier P."/>
            <person name="Burtis K.C."/>
            <person name="Busam D.A."/>
            <person name="Butler H."/>
            <person name="Cadieu E."/>
            <person name="Center A."/>
            <person name="Chandra I."/>
            <person name="Cherry J.M."/>
            <person name="Cawley S."/>
            <person name="Dahlke C."/>
            <person name="Davenport L.B."/>
            <person name="Davies P."/>
            <person name="de Pablos B."/>
            <person name="Delcher A."/>
            <person name="Deng Z."/>
            <person name="Mays A.D."/>
            <person name="Dew I."/>
            <person name="Dietz S.M."/>
            <person name="Dodson K."/>
            <person name="Doup L.E."/>
            <person name="Downes M."/>
            <person name="Dugan-Rocha S."/>
            <person name="Dunkov B.C."/>
            <person name="Dunn P."/>
            <person name="Durbin K.J."/>
            <person name="Evangelista C.C."/>
            <person name="Ferraz C."/>
            <person name="Ferriera S."/>
            <person name="Fleischmann W."/>
            <person name="Fosler C."/>
            <person name="Gabrielian A.E."/>
            <person name="Garg N.S."/>
            <person name="Gelbart W.M."/>
            <person name="Glasser K."/>
            <person name="Glodek A."/>
            <person name="Gong F."/>
            <person name="Gorrell J.H."/>
            <person name="Gu Z."/>
            <person name="Guan P."/>
            <person name="Harris M."/>
            <person name="Harris N.L."/>
            <person name="Harvey D.A."/>
            <person name="Heiman T.J."/>
            <person name="Hernandez J.R."/>
            <person name="Houck J."/>
            <person name="Hostin D."/>
            <person name="Houston K.A."/>
            <person name="Howland T.J."/>
            <person name="Wei M.-H."/>
            <person name="Ibegwam C."/>
            <person name="Jalali M."/>
            <person name="Kalush F."/>
            <person name="Karpen G.H."/>
            <person name="Ke Z."/>
            <person name="Kennison J.A."/>
            <person name="Ketchum K.A."/>
            <person name="Kimmel B.E."/>
            <person name="Kodira C.D."/>
            <person name="Kraft C.L."/>
            <person name="Kravitz S."/>
            <person name="Kulp D."/>
            <person name="Lai Z."/>
            <person name="Lasko P."/>
            <person name="Lei Y."/>
            <person name="Levitsky A.A."/>
            <person name="Li J.H."/>
            <person name="Li Z."/>
            <person name="Liang Y."/>
            <person name="Lin X."/>
            <person name="Liu X."/>
            <person name="Mattei B."/>
            <person name="McIntosh T.C."/>
            <person name="McLeod M.P."/>
            <person name="McPherson D."/>
            <person name="Merkulov G."/>
            <person name="Milshina N.V."/>
            <person name="Mobarry C."/>
            <person name="Morris J."/>
            <person name="Moshrefi A."/>
            <person name="Mount S.M."/>
            <person name="Moy M."/>
            <person name="Murphy B."/>
            <person name="Murphy L."/>
            <person name="Muzny D.M."/>
            <person name="Nelson D.L."/>
            <person name="Nelson D.R."/>
            <person name="Nelson K.A."/>
            <person name="Nixon K."/>
            <person name="Nusskern D.R."/>
            <person name="Pacleb J.M."/>
            <person name="Palazzolo M."/>
            <person name="Pittman G.S."/>
            <person name="Pan S."/>
            <person name="Pollard J."/>
            <person name="Puri V."/>
            <person name="Reese M.G."/>
            <person name="Reinert K."/>
            <person name="Remington K."/>
            <person name="Saunders R.D.C."/>
            <person name="Scheeler F."/>
            <person name="Shen H."/>
            <person name="Shue B.C."/>
            <person name="Siden-Kiamos I."/>
            <person name="Simpson M."/>
            <person name="Skupski M.P."/>
            <person name="Smith T.J."/>
            <person name="Spier E."/>
            <person name="Spradling A.C."/>
            <person name="Stapleton M."/>
            <person name="Strong R."/>
            <person name="Sun E."/>
            <person name="Svirskas R."/>
            <person name="Tector C."/>
            <person name="Turner R."/>
            <person name="Venter E."/>
            <person name="Wang A.H."/>
            <person name="Wang X."/>
            <person name="Wang Z.-Y."/>
            <person name="Wassarman D.A."/>
            <person name="Weinstock G.M."/>
            <person name="Weissenbach J."/>
            <person name="Williams S.M."/>
            <person name="Woodage T."/>
            <person name="Worley K.C."/>
            <person name="Wu D."/>
            <person name="Yang S."/>
            <person name="Yao Q.A."/>
            <person name="Ye J."/>
            <person name="Yeh R.-F."/>
            <person name="Zaveri J.S."/>
            <person name="Zhan M."/>
            <person name="Zhang G."/>
            <person name="Zhao Q."/>
            <person name="Zheng L."/>
            <person name="Zheng X.H."/>
            <person name="Zhong F.N."/>
            <person name="Zhong W."/>
            <person name="Zhou X."/>
            <person name="Zhu S.C."/>
            <person name="Zhu X."/>
            <person name="Smith H.O."/>
            <person name="Gibbs R.A."/>
            <person name="Myers E.W."/>
            <person name="Rubin G.M."/>
            <person name="Venter J.C."/>
        </authorList>
    </citation>
    <scope>NUCLEOTIDE SEQUENCE [LARGE SCALE GENOMIC DNA]</scope>
    <source>
        <strain>Berkeley</strain>
    </source>
</reference>
<reference key="2">
    <citation type="journal article" date="2002" name="Genome Biol.">
        <title>Annotation of the Drosophila melanogaster euchromatic genome: a systematic review.</title>
        <authorList>
            <person name="Misra S."/>
            <person name="Crosby M.A."/>
            <person name="Mungall C.J."/>
            <person name="Matthews B.B."/>
            <person name="Campbell K.S."/>
            <person name="Hradecky P."/>
            <person name="Huang Y."/>
            <person name="Kaminker J.S."/>
            <person name="Millburn G.H."/>
            <person name="Prochnik S.E."/>
            <person name="Smith C.D."/>
            <person name="Tupy J.L."/>
            <person name="Whitfield E.J."/>
            <person name="Bayraktaroglu L."/>
            <person name="Berman B.P."/>
            <person name="Bettencourt B.R."/>
            <person name="Celniker S.E."/>
            <person name="de Grey A.D.N.J."/>
            <person name="Drysdale R.A."/>
            <person name="Harris N.L."/>
            <person name="Richter J."/>
            <person name="Russo S."/>
            <person name="Schroeder A.J."/>
            <person name="Shu S.Q."/>
            <person name="Stapleton M."/>
            <person name="Yamada C."/>
            <person name="Ashburner M."/>
            <person name="Gelbart W.M."/>
            <person name="Rubin G.M."/>
            <person name="Lewis S.E."/>
        </authorList>
    </citation>
    <scope>GENOME REANNOTATION</scope>
    <source>
        <strain>Berkeley</strain>
    </source>
</reference>
<reference key="3">
    <citation type="submission" date="2007-12" db="EMBL/GenBank/DDBJ databases">
        <authorList>
            <person name="Stapleton M."/>
            <person name="Carlson J.W."/>
            <person name="Frise E."/>
            <person name="Kapadia B."/>
            <person name="Park S."/>
            <person name="Wan K.H."/>
            <person name="Yu C."/>
            <person name="Celniker S.E."/>
        </authorList>
    </citation>
    <scope>NUCLEOTIDE SEQUENCE [LARGE SCALE MRNA]</scope>
    <source>
        <strain>Berkeley</strain>
        <tissue>Embryo</tissue>
    </source>
</reference>
<evidence type="ECO:0000250" key="1"/>
<evidence type="ECO:0000255" key="2"/>
<evidence type="ECO:0000305" key="3"/>
<proteinExistence type="evidence at transcript level"/>
<feature type="chain" id="PRO_0000213373" description="Solute carrier family 35 member B1 homolog">
    <location>
        <begin position="1"/>
        <end position="338"/>
    </location>
</feature>
<feature type="transmembrane region" description="Helical" evidence="2">
    <location>
        <begin position="9"/>
        <end position="29"/>
    </location>
</feature>
<feature type="transmembrane region" description="Helical" evidence="2">
    <location>
        <begin position="53"/>
        <end position="73"/>
    </location>
</feature>
<feature type="transmembrane region" description="Helical" evidence="2">
    <location>
        <begin position="84"/>
        <end position="104"/>
    </location>
</feature>
<feature type="transmembrane region" description="Helical" evidence="2">
    <location>
        <begin position="111"/>
        <end position="131"/>
    </location>
</feature>
<feature type="transmembrane region" description="Helical" evidence="2">
    <location>
        <begin position="135"/>
        <end position="155"/>
    </location>
</feature>
<feature type="transmembrane region" description="Helical" evidence="2">
    <location>
        <begin position="168"/>
        <end position="188"/>
    </location>
</feature>
<feature type="transmembrane region" description="Helical" evidence="2">
    <location>
        <begin position="213"/>
        <end position="233"/>
    </location>
</feature>
<feature type="transmembrane region" description="Helical" evidence="2">
    <location>
        <begin position="244"/>
        <end position="264"/>
    </location>
</feature>
<feature type="transmembrane region" description="Helical" evidence="2">
    <location>
        <begin position="284"/>
        <end position="304"/>
    </location>
</feature>
<feature type="short sequence motif" description="Di-lysine motif">
    <location>
        <begin position="334"/>
        <end position="338"/>
    </location>
</feature>